<feature type="chain" id="PRO_0000169197" description="Elongation factor P lysine hydroxylase">
    <location>
        <begin position="1"/>
        <end position="178"/>
    </location>
</feature>
<keyword id="KW-0503">Monooxygenase</keyword>
<keyword id="KW-0560">Oxidoreductase</keyword>
<keyword id="KW-1185">Reference proteome</keyword>
<dbReference type="EC" id="1.14.13.-" evidence="1"/>
<dbReference type="EMBL" id="L42023">
    <property type="protein sequence ID" value="AAC23212.1"/>
    <property type="molecule type" value="Genomic_DNA"/>
</dbReference>
<dbReference type="PIR" id="D64036">
    <property type="entry name" value="D64036"/>
</dbReference>
<dbReference type="RefSeq" id="NP_439712.1">
    <property type="nucleotide sequence ID" value="NC_000907.1"/>
</dbReference>
<dbReference type="SMR" id="P44255"/>
<dbReference type="STRING" id="71421.HI_1563"/>
<dbReference type="EnsemblBacteria" id="AAC23212">
    <property type="protein sequence ID" value="AAC23212"/>
    <property type="gene ID" value="HI_1563"/>
</dbReference>
<dbReference type="KEGG" id="hin:HI_1563"/>
<dbReference type="PATRIC" id="fig|71421.8.peg.1634"/>
<dbReference type="eggNOG" id="COG3101">
    <property type="taxonomic scope" value="Bacteria"/>
</dbReference>
<dbReference type="HOGENOM" id="CLU_097152_0_0_6"/>
<dbReference type="OrthoDB" id="5298591at2"/>
<dbReference type="PhylomeDB" id="P44255"/>
<dbReference type="BioCyc" id="HINF71421:G1GJ1-1582-MONOMER"/>
<dbReference type="Proteomes" id="UP000000579">
    <property type="component" value="Chromosome"/>
</dbReference>
<dbReference type="GO" id="GO:0004497">
    <property type="term" value="F:monooxygenase activity"/>
    <property type="evidence" value="ECO:0007669"/>
    <property type="project" value="UniProtKB-KW"/>
</dbReference>
<dbReference type="InterPro" id="IPR007411">
    <property type="entry name" value="EpmC"/>
</dbReference>
<dbReference type="Pfam" id="PF04315">
    <property type="entry name" value="EpmC"/>
    <property type="match status" value="1"/>
</dbReference>
<accession>P44255</accession>
<comment type="function">
    <text evidence="1">Is involved in the final hydroxylation step of the post-translational modification of translation elongation factor P (EF-P) on 'Lys-34'. Acts after beta-lysylation of 'Lys-34' by EpmA and EpmB. EpmC adds an oxygen atom to the C5 position of 'Lys-34' and does not modify the added beta-lysine.</text>
</comment>
<comment type="catalytic activity">
    <reaction evidence="1">
        <text>N(6)-((3R)-3,6-diaminohexanoyl)-L-lysyl-[protein] + NADPH + O2 + H(+) = N(6)-((3R)-3,6-diaminohexanoyl)-5-hydroxy-L-lysyl-[protein] + NADP(+) + H2O</text>
        <dbReference type="Rhea" id="RHEA:83439"/>
        <dbReference type="Rhea" id="RHEA-COMP:20131"/>
        <dbReference type="Rhea" id="RHEA-COMP:20132"/>
        <dbReference type="ChEBI" id="CHEBI:15377"/>
        <dbReference type="ChEBI" id="CHEBI:15378"/>
        <dbReference type="ChEBI" id="CHEBI:15379"/>
        <dbReference type="ChEBI" id="CHEBI:57783"/>
        <dbReference type="ChEBI" id="CHEBI:58349"/>
        <dbReference type="ChEBI" id="CHEBI:156053"/>
        <dbReference type="ChEBI" id="CHEBI:156054"/>
    </reaction>
    <physiologicalReaction direction="left-to-right" evidence="1">
        <dbReference type="Rhea" id="RHEA:83440"/>
    </physiologicalReaction>
</comment>
<comment type="similarity">
    <text evidence="2">Belongs to the EpmC family.</text>
</comment>
<gene>
    <name type="primary">epmC</name>
    <name type="ordered locus">HI_1563</name>
</gene>
<evidence type="ECO:0000250" key="1">
    <source>
        <dbReference type="UniProtKB" id="P76938"/>
    </source>
</evidence>
<evidence type="ECO:0000305" key="2"/>
<name>EPMC_HAEIN</name>
<protein>
    <recommendedName>
        <fullName evidence="1">Elongation factor P lysine hydroxylase</fullName>
        <shortName evidence="1">EF-P lysine hydroxylase</shortName>
        <ecNumber evidence="1">1.14.13.-</ecNumber>
    </recommendedName>
    <alternativeName>
        <fullName>EF-P post-translational modification enzyme C</fullName>
    </alternativeName>
</protein>
<organism>
    <name type="scientific">Haemophilus influenzae (strain ATCC 51907 / DSM 11121 / KW20 / Rd)</name>
    <dbReference type="NCBI Taxonomy" id="71421"/>
    <lineage>
        <taxon>Bacteria</taxon>
        <taxon>Pseudomonadati</taxon>
        <taxon>Pseudomonadota</taxon>
        <taxon>Gammaproteobacteria</taxon>
        <taxon>Pasteurellales</taxon>
        <taxon>Pasteurellaceae</taxon>
        <taxon>Haemophilus</taxon>
    </lineage>
</organism>
<proteinExistence type="inferred from homology"/>
<sequence length="178" mass="20604">MEHKLEDIIAIFNQCFEEEYNTRLVKGGDEPIYLPANDEVPYNAIYFARGFYSSALHEIAHWLVAGKERRKLEDFGYWYEPDGRSEERQRDFEKVEVKPQALEWILATAAGFRYFASADNLNGNPGDTQPFKQAVYEQVKIYAEKGLPKRAETLRKALVAFYSTEDDINLAKFDVTCI</sequence>
<reference key="1">
    <citation type="journal article" date="1995" name="Science">
        <title>Whole-genome random sequencing and assembly of Haemophilus influenzae Rd.</title>
        <authorList>
            <person name="Fleischmann R.D."/>
            <person name="Adams M.D."/>
            <person name="White O."/>
            <person name="Clayton R.A."/>
            <person name="Kirkness E.F."/>
            <person name="Kerlavage A.R."/>
            <person name="Bult C.J."/>
            <person name="Tomb J.-F."/>
            <person name="Dougherty B.A."/>
            <person name="Merrick J.M."/>
            <person name="McKenney K."/>
            <person name="Sutton G.G."/>
            <person name="FitzHugh W."/>
            <person name="Fields C.A."/>
            <person name="Gocayne J.D."/>
            <person name="Scott J.D."/>
            <person name="Shirley R."/>
            <person name="Liu L.-I."/>
            <person name="Glodek A."/>
            <person name="Kelley J.M."/>
            <person name="Weidman J.F."/>
            <person name="Phillips C.A."/>
            <person name="Spriggs T."/>
            <person name="Hedblom E."/>
            <person name="Cotton M.D."/>
            <person name="Utterback T.R."/>
            <person name="Hanna M.C."/>
            <person name="Nguyen D.T."/>
            <person name="Saudek D.M."/>
            <person name="Brandon R.C."/>
            <person name="Fine L.D."/>
            <person name="Fritchman J.L."/>
            <person name="Fuhrmann J.L."/>
            <person name="Geoghagen N.S.M."/>
            <person name="Gnehm C.L."/>
            <person name="McDonald L.A."/>
            <person name="Small K.V."/>
            <person name="Fraser C.M."/>
            <person name="Smith H.O."/>
            <person name="Venter J.C."/>
        </authorList>
    </citation>
    <scope>NUCLEOTIDE SEQUENCE [LARGE SCALE GENOMIC DNA]</scope>
    <source>
        <strain>ATCC 51907 / DSM 11121 / KW20 / Rd</strain>
    </source>
</reference>